<dbReference type="EC" id="3.1.3.16" evidence="2"/>
<dbReference type="EMBL" id="AY328084">
    <property type="protein sequence ID" value="AAP92916.1"/>
    <property type="molecule type" value="mRNA"/>
</dbReference>
<dbReference type="EMBL" id="GL985078">
    <property type="protein sequence ID" value="EGR45524.1"/>
    <property type="molecule type" value="Genomic_DNA"/>
</dbReference>
<dbReference type="RefSeq" id="XP_006968458.1">
    <property type="nucleotide sequence ID" value="XM_006968396.1"/>
</dbReference>
<dbReference type="STRING" id="431241.G0RT93"/>
<dbReference type="EnsemblFungi" id="EGR45524">
    <property type="protein sequence ID" value="EGR45524"/>
    <property type="gene ID" value="TRIREDRAFT_81164"/>
</dbReference>
<dbReference type="GeneID" id="18489293"/>
<dbReference type="KEGG" id="tre:TRIREDRAFT_81164"/>
<dbReference type="VEuPathDB" id="FungiDB:TRIREDRAFT_81164"/>
<dbReference type="VEuPathDB" id="FungiDB:TrQ_003614"/>
<dbReference type="eggNOG" id="KOG0698">
    <property type="taxonomic scope" value="Eukaryota"/>
</dbReference>
<dbReference type="HOGENOM" id="CLU_013173_4_3_1"/>
<dbReference type="OMA" id="GPGIRNQ"/>
<dbReference type="OrthoDB" id="10264738at2759"/>
<dbReference type="Proteomes" id="UP000008984">
    <property type="component" value="Unassembled WGS sequence"/>
</dbReference>
<dbReference type="GO" id="GO:0005737">
    <property type="term" value="C:cytoplasm"/>
    <property type="evidence" value="ECO:0007669"/>
    <property type="project" value="UniProtKB-SubCell"/>
</dbReference>
<dbReference type="GO" id="GO:0005634">
    <property type="term" value="C:nucleus"/>
    <property type="evidence" value="ECO:0007669"/>
    <property type="project" value="UniProtKB-SubCell"/>
</dbReference>
<dbReference type="GO" id="GO:0046872">
    <property type="term" value="F:metal ion binding"/>
    <property type="evidence" value="ECO:0007669"/>
    <property type="project" value="UniProtKB-KW"/>
</dbReference>
<dbReference type="GO" id="GO:0004722">
    <property type="term" value="F:protein serine/threonine phosphatase activity"/>
    <property type="evidence" value="ECO:0007669"/>
    <property type="project" value="EnsemblFungi"/>
</dbReference>
<dbReference type="CDD" id="cd00143">
    <property type="entry name" value="PP2Cc"/>
    <property type="match status" value="1"/>
</dbReference>
<dbReference type="FunFam" id="3.60.40.10:FF:000016">
    <property type="entry name" value="Protein phosphatase 2C"/>
    <property type="match status" value="1"/>
</dbReference>
<dbReference type="Gene3D" id="3.60.40.10">
    <property type="entry name" value="PPM-type phosphatase domain"/>
    <property type="match status" value="1"/>
</dbReference>
<dbReference type="InterPro" id="IPR015655">
    <property type="entry name" value="PP2C"/>
</dbReference>
<dbReference type="InterPro" id="IPR000222">
    <property type="entry name" value="PP2C_BS"/>
</dbReference>
<dbReference type="InterPro" id="IPR036457">
    <property type="entry name" value="PPM-type-like_dom_sf"/>
</dbReference>
<dbReference type="InterPro" id="IPR001932">
    <property type="entry name" value="PPM-type_phosphatase-like_dom"/>
</dbReference>
<dbReference type="PANTHER" id="PTHR13832:SF565">
    <property type="entry name" value="AT28366P-RELATED"/>
    <property type="match status" value="1"/>
</dbReference>
<dbReference type="PANTHER" id="PTHR13832">
    <property type="entry name" value="PROTEIN PHOSPHATASE 2C"/>
    <property type="match status" value="1"/>
</dbReference>
<dbReference type="Pfam" id="PF00481">
    <property type="entry name" value="PP2C"/>
    <property type="match status" value="1"/>
</dbReference>
<dbReference type="SMART" id="SM00331">
    <property type="entry name" value="PP2C_SIG"/>
    <property type="match status" value="1"/>
</dbReference>
<dbReference type="SMART" id="SM00332">
    <property type="entry name" value="PP2Cc"/>
    <property type="match status" value="1"/>
</dbReference>
<dbReference type="SUPFAM" id="SSF81606">
    <property type="entry name" value="PP2C-like"/>
    <property type="match status" value="1"/>
</dbReference>
<dbReference type="PROSITE" id="PS01032">
    <property type="entry name" value="PPM_1"/>
    <property type="match status" value="1"/>
</dbReference>
<dbReference type="PROSITE" id="PS51746">
    <property type="entry name" value="PPM_2"/>
    <property type="match status" value="1"/>
</dbReference>
<gene>
    <name evidence="6" type="primary">PTC2</name>
    <name evidence="9" type="ORF">TRIREDRAFT_81164</name>
</gene>
<accession>G0RT93</accession>
<accession>Q7Z8F2</accession>
<name>PP2C2_HYPJQ</name>
<comment type="function">
    <text evidence="2 5">Dephosphorylating regulator for many key proteins (By similarity). Negatively regulates the endoplasmic reticulum unfolded protein response (PubMed:15480788).</text>
</comment>
<comment type="catalytic activity">
    <reaction evidence="3">
        <text>O-phospho-L-seryl-[protein] + H2O = L-seryl-[protein] + phosphate</text>
        <dbReference type="Rhea" id="RHEA:20629"/>
        <dbReference type="Rhea" id="RHEA-COMP:9863"/>
        <dbReference type="Rhea" id="RHEA-COMP:11604"/>
        <dbReference type="ChEBI" id="CHEBI:15377"/>
        <dbReference type="ChEBI" id="CHEBI:29999"/>
        <dbReference type="ChEBI" id="CHEBI:43474"/>
        <dbReference type="ChEBI" id="CHEBI:83421"/>
        <dbReference type="EC" id="3.1.3.16"/>
    </reaction>
    <physiologicalReaction direction="left-to-right" evidence="7">
        <dbReference type="Rhea" id="RHEA:20630"/>
    </physiologicalReaction>
</comment>
<comment type="catalytic activity">
    <reaction evidence="2">
        <text>O-phospho-L-threonyl-[protein] + H2O = L-threonyl-[protein] + phosphate</text>
        <dbReference type="Rhea" id="RHEA:47004"/>
        <dbReference type="Rhea" id="RHEA-COMP:11060"/>
        <dbReference type="Rhea" id="RHEA-COMP:11605"/>
        <dbReference type="ChEBI" id="CHEBI:15377"/>
        <dbReference type="ChEBI" id="CHEBI:30013"/>
        <dbReference type="ChEBI" id="CHEBI:43474"/>
        <dbReference type="ChEBI" id="CHEBI:61977"/>
        <dbReference type="EC" id="3.1.3.16"/>
    </reaction>
    <physiologicalReaction direction="left-to-right" evidence="2">
        <dbReference type="Rhea" id="RHEA:47005"/>
    </physiologicalReaction>
</comment>
<comment type="cofactor">
    <cofactor evidence="1">
        <name>Mg(2+)</name>
        <dbReference type="ChEBI" id="CHEBI:18420"/>
    </cofactor>
    <cofactor evidence="1">
        <name>Mn(2+)</name>
        <dbReference type="ChEBI" id="CHEBI:29035"/>
    </cofactor>
    <text evidence="3">Binds 2 magnesium or manganese ions per subunit.</text>
</comment>
<comment type="subcellular location">
    <subcellularLocation>
        <location evidence="2">Cytoplasm</location>
    </subcellularLocation>
    <subcellularLocation>
        <location evidence="2">Nucleus</location>
    </subcellularLocation>
</comment>
<comment type="similarity">
    <text evidence="7">Belongs to the PP2C family.</text>
</comment>
<feature type="chain" id="PRO_0000461656" description="Protein phosphatase 2C homolog 2">
    <location>
        <begin position="1"/>
        <end position="438"/>
    </location>
</feature>
<feature type="domain" description="PPM-type phosphatase" evidence="3">
    <location>
        <begin position="23"/>
        <end position="294"/>
    </location>
</feature>
<feature type="region of interest" description="Disordered" evidence="4">
    <location>
        <begin position="370"/>
        <end position="438"/>
    </location>
</feature>
<feature type="compositionally biased region" description="Acidic residues" evidence="4">
    <location>
        <begin position="375"/>
        <end position="387"/>
    </location>
</feature>
<feature type="compositionally biased region" description="Basic and acidic residues" evidence="4">
    <location>
        <begin position="398"/>
        <end position="438"/>
    </location>
</feature>
<feature type="binding site" evidence="1">
    <location>
        <position position="67"/>
    </location>
    <ligand>
        <name>Mn(2+)</name>
        <dbReference type="ChEBI" id="CHEBI:29035"/>
        <label>1</label>
    </ligand>
</feature>
<feature type="binding site" evidence="1">
    <location>
        <position position="67"/>
    </location>
    <ligand>
        <name>Mn(2+)</name>
        <dbReference type="ChEBI" id="CHEBI:29035"/>
        <label>2</label>
    </ligand>
</feature>
<feature type="binding site" evidence="1">
    <location>
        <position position="68"/>
    </location>
    <ligand>
        <name>Mn(2+)</name>
        <dbReference type="ChEBI" id="CHEBI:29035"/>
        <label>1</label>
    </ligand>
</feature>
<feature type="binding site" evidence="1">
    <location>
        <position position="236"/>
    </location>
    <ligand>
        <name>Mn(2+)</name>
        <dbReference type="ChEBI" id="CHEBI:29035"/>
        <label>2</label>
    </ligand>
</feature>
<feature type="binding site" evidence="1">
    <location>
        <position position="285"/>
    </location>
    <ligand>
        <name>Mn(2+)</name>
        <dbReference type="ChEBI" id="CHEBI:29035"/>
        <label>2</label>
    </ligand>
</feature>
<reference evidence="8" key="1">
    <citation type="journal article" date="2004" name="Mol. Genet. Genomics">
        <title>The ire1 and ptc2 genes involved in the unfolded protein response pathway in the filamentous fungus Trichoderma reesei.</title>
        <authorList>
            <person name="Valkonen M."/>
            <person name="Penttila M."/>
            <person name="Saloheimo M."/>
        </authorList>
    </citation>
    <scope>NUCLEOTIDE SEQUENCE [MRNA]</scope>
    <scope>FUNCTION</scope>
    <source>
        <strain evidence="6">QM6a</strain>
    </source>
</reference>
<reference evidence="10" key="2">
    <citation type="journal article" date="2008" name="Nat. Biotechnol.">
        <title>Genome sequencing and analysis of the biomass-degrading fungus Trichoderma reesei (syn. Hypocrea jecorina).</title>
        <authorList>
            <person name="Martinez D."/>
            <person name="Berka R.M."/>
            <person name="Henrissat B."/>
            <person name="Saloheimo M."/>
            <person name="Arvas M."/>
            <person name="Baker S.E."/>
            <person name="Chapman J."/>
            <person name="Chertkov O."/>
            <person name="Coutinho P.M."/>
            <person name="Cullen D."/>
            <person name="Danchin E.G."/>
            <person name="Grigoriev I.V."/>
            <person name="Harris P."/>
            <person name="Jackson M."/>
            <person name="Kubicek C.P."/>
            <person name="Han C.S."/>
            <person name="Ho I."/>
            <person name="Larrondo L.F."/>
            <person name="de Leon A.L."/>
            <person name="Magnuson J.K."/>
            <person name="Merino S."/>
            <person name="Misra M."/>
            <person name="Nelson B."/>
            <person name="Putnam N."/>
            <person name="Robbertse B."/>
            <person name="Salamov A.A."/>
            <person name="Schmoll M."/>
            <person name="Terry A."/>
            <person name="Thayer N."/>
            <person name="Westerholm-Parvinen A."/>
            <person name="Schoch C.L."/>
            <person name="Yao J."/>
            <person name="Barabote R."/>
            <person name="Nelson M.A."/>
            <person name="Detter C."/>
            <person name="Bruce D."/>
            <person name="Kuske C.R."/>
            <person name="Xie G."/>
            <person name="Richardson P."/>
            <person name="Rokhsar D.S."/>
            <person name="Lucas S.M."/>
            <person name="Rubin E.M."/>
            <person name="Dunn-Coleman N."/>
            <person name="Ward M."/>
            <person name="Brettin T.S."/>
        </authorList>
    </citation>
    <scope>NUCLEOTIDE SEQUENCE [LARGE SCALE GENOMIC DNA]</scope>
    <source>
        <strain evidence="10">QM6a</strain>
    </source>
</reference>
<proteinExistence type="evidence at transcript level"/>
<keyword id="KW-0963">Cytoplasm</keyword>
<keyword id="KW-0378">Hydrolase</keyword>
<keyword id="KW-0460">Magnesium</keyword>
<keyword id="KW-0464">Manganese</keyword>
<keyword id="KW-0479">Metal-binding</keyword>
<keyword id="KW-0539">Nucleus</keyword>
<keyword id="KW-0904">Protein phosphatase</keyword>
<keyword id="KW-1185">Reference proteome</keyword>
<organism evidence="10">
    <name type="scientific">Hypocrea jecorina (strain QM6a)</name>
    <name type="common">Trichoderma reesei</name>
    <dbReference type="NCBI Taxonomy" id="431241"/>
    <lineage>
        <taxon>Eukaryota</taxon>
        <taxon>Fungi</taxon>
        <taxon>Dikarya</taxon>
        <taxon>Ascomycota</taxon>
        <taxon>Pezizomycotina</taxon>
        <taxon>Sordariomycetes</taxon>
        <taxon>Hypocreomycetidae</taxon>
        <taxon>Hypocreales</taxon>
        <taxon>Hypocreaceae</taxon>
        <taxon>Trichoderma</taxon>
    </lineage>
</organism>
<evidence type="ECO:0000250" key="1">
    <source>
        <dbReference type="UniProtKB" id="P35813"/>
    </source>
</evidence>
<evidence type="ECO:0000250" key="2">
    <source>
        <dbReference type="UniProtKB" id="P39966"/>
    </source>
</evidence>
<evidence type="ECO:0000255" key="3">
    <source>
        <dbReference type="PROSITE-ProRule" id="PRU01082"/>
    </source>
</evidence>
<evidence type="ECO:0000256" key="4">
    <source>
        <dbReference type="SAM" id="MobiDB-lite"/>
    </source>
</evidence>
<evidence type="ECO:0000269" key="5">
    <source>
    </source>
</evidence>
<evidence type="ECO:0000303" key="6">
    <source>
    </source>
</evidence>
<evidence type="ECO:0000305" key="7"/>
<evidence type="ECO:0000312" key="8">
    <source>
        <dbReference type="EMBL" id="AAP92916.1"/>
    </source>
</evidence>
<evidence type="ECO:0000312" key="9">
    <source>
        <dbReference type="EMBL" id="EGR45524.1"/>
    </source>
</evidence>
<evidence type="ECO:0000312" key="10">
    <source>
        <dbReference type="Proteomes" id="UP000008984"/>
    </source>
</evidence>
<protein>
    <recommendedName>
        <fullName evidence="7">Protein phosphatase 2C homolog 2</fullName>
        <shortName evidence="7">PP2C-2</shortName>
        <ecNumber evidence="2">3.1.3.16</ecNumber>
    </recommendedName>
</protein>
<sequence length="438" mass="47486">MGQTLSEPVVEKTSEKGEDDRLIYGVSAMQGWRISMEDAHTAELNLPPPDNDTKTHPDRLSFFGVFDGHGGDKVALFAGENIHNIVFKQESFKSGDYAQGLKDGFLATDRAILNDPKYEEEVSGCTACVTLIAGNKLYVANAGDSRSVLGIKGRAKPLSNDHKPQLETEKNRITAAGGFVDFGRVNGNLALSRAIGDFEFKKSAELSPENQIVTAFPDVEVHELTEEDEFLVIACDGIWDCQSSQAVVEFVRRGIAAKQDLDKICENMMDNCLASNSETGGVGCDNMTMVIIGFLHGKTKEEWYDEIAKRVANGDGPCAPPEYAEFRGPGVHHNYEDSDSGYDVDADSGGKFSLAGSRGRIIFLGDGTEVLTGSDDTEMFDNADEDKDLASQVPKSSGKTDAKEETEAKPAPEAESSKPADGSEKKQDEKTPEESKKD</sequence>